<feature type="chain" id="PRO_0000192140" description="Bifunctional purine biosynthesis protein PurH">
    <location>
        <begin position="1"/>
        <end position="518"/>
    </location>
</feature>
<feature type="domain" description="MGS-like" evidence="2">
    <location>
        <begin position="1"/>
        <end position="146"/>
    </location>
</feature>
<dbReference type="EC" id="2.1.2.3" evidence="1"/>
<dbReference type="EC" id="3.5.4.10" evidence="1"/>
<dbReference type="EMBL" id="BA000039">
    <property type="protein sequence ID" value="BAC09099.1"/>
    <property type="molecule type" value="Genomic_DNA"/>
</dbReference>
<dbReference type="RefSeq" id="NP_682337.1">
    <property type="nucleotide sequence ID" value="NC_004113.1"/>
</dbReference>
<dbReference type="RefSeq" id="WP_011057387.1">
    <property type="nucleotide sequence ID" value="NC_004113.1"/>
</dbReference>
<dbReference type="SMR" id="Q8DIN5"/>
<dbReference type="STRING" id="197221.gene:10748148"/>
<dbReference type="EnsemblBacteria" id="BAC09099">
    <property type="protein sequence ID" value="BAC09099"/>
    <property type="gene ID" value="BAC09099"/>
</dbReference>
<dbReference type="KEGG" id="tel:tlr1547"/>
<dbReference type="PATRIC" id="fig|197221.4.peg.1623"/>
<dbReference type="eggNOG" id="COG0138">
    <property type="taxonomic scope" value="Bacteria"/>
</dbReference>
<dbReference type="UniPathway" id="UPA00074">
    <property type="reaction ID" value="UER00133"/>
</dbReference>
<dbReference type="UniPathway" id="UPA00074">
    <property type="reaction ID" value="UER00135"/>
</dbReference>
<dbReference type="Proteomes" id="UP000000440">
    <property type="component" value="Chromosome"/>
</dbReference>
<dbReference type="GO" id="GO:0005829">
    <property type="term" value="C:cytosol"/>
    <property type="evidence" value="ECO:0007669"/>
    <property type="project" value="TreeGrafter"/>
</dbReference>
<dbReference type="GO" id="GO:0003937">
    <property type="term" value="F:IMP cyclohydrolase activity"/>
    <property type="evidence" value="ECO:0007669"/>
    <property type="project" value="UniProtKB-UniRule"/>
</dbReference>
<dbReference type="GO" id="GO:0004643">
    <property type="term" value="F:phosphoribosylaminoimidazolecarboxamide formyltransferase activity"/>
    <property type="evidence" value="ECO:0007669"/>
    <property type="project" value="UniProtKB-UniRule"/>
</dbReference>
<dbReference type="GO" id="GO:0006189">
    <property type="term" value="P:'de novo' IMP biosynthetic process"/>
    <property type="evidence" value="ECO:0007669"/>
    <property type="project" value="UniProtKB-UniRule"/>
</dbReference>
<dbReference type="CDD" id="cd01421">
    <property type="entry name" value="IMPCH"/>
    <property type="match status" value="1"/>
</dbReference>
<dbReference type="FunFam" id="3.40.140.20:FF:000001">
    <property type="entry name" value="Bifunctional purine biosynthesis protein PurH"/>
    <property type="match status" value="1"/>
</dbReference>
<dbReference type="FunFam" id="3.40.50.1380:FF:000001">
    <property type="entry name" value="Bifunctional purine biosynthesis protein PurH"/>
    <property type="match status" value="1"/>
</dbReference>
<dbReference type="Gene3D" id="3.40.140.20">
    <property type="match status" value="2"/>
</dbReference>
<dbReference type="Gene3D" id="3.40.50.1380">
    <property type="entry name" value="Methylglyoxal synthase-like domain"/>
    <property type="match status" value="1"/>
</dbReference>
<dbReference type="HAMAP" id="MF_00139">
    <property type="entry name" value="PurH"/>
    <property type="match status" value="1"/>
</dbReference>
<dbReference type="InterPro" id="IPR024051">
    <property type="entry name" value="AICAR_Tfase_dup_dom_sf"/>
</dbReference>
<dbReference type="InterPro" id="IPR016193">
    <property type="entry name" value="Cytidine_deaminase-like"/>
</dbReference>
<dbReference type="InterPro" id="IPR011607">
    <property type="entry name" value="MGS-like_dom"/>
</dbReference>
<dbReference type="InterPro" id="IPR036914">
    <property type="entry name" value="MGS-like_dom_sf"/>
</dbReference>
<dbReference type="InterPro" id="IPR002695">
    <property type="entry name" value="PurH-like"/>
</dbReference>
<dbReference type="NCBIfam" id="NF002049">
    <property type="entry name" value="PRK00881.1"/>
    <property type="match status" value="1"/>
</dbReference>
<dbReference type="NCBIfam" id="TIGR00355">
    <property type="entry name" value="purH"/>
    <property type="match status" value="1"/>
</dbReference>
<dbReference type="PANTHER" id="PTHR11692:SF0">
    <property type="entry name" value="BIFUNCTIONAL PURINE BIOSYNTHESIS PROTEIN ATIC"/>
    <property type="match status" value="1"/>
</dbReference>
<dbReference type="PANTHER" id="PTHR11692">
    <property type="entry name" value="BIFUNCTIONAL PURINE BIOSYNTHESIS PROTEIN PURH"/>
    <property type="match status" value="1"/>
</dbReference>
<dbReference type="Pfam" id="PF01808">
    <property type="entry name" value="AICARFT_IMPCHas"/>
    <property type="match status" value="1"/>
</dbReference>
<dbReference type="Pfam" id="PF02142">
    <property type="entry name" value="MGS"/>
    <property type="match status" value="1"/>
</dbReference>
<dbReference type="PIRSF" id="PIRSF000414">
    <property type="entry name" value="AICARFT_IMPCHas"/>
    <property type="match status" value="1"/>
</dbReference>
<dbReference type="SMART" id="SM00798">
    <property type="entry name" value="AICARFT_IMPCHas"/>
    <property type="match status" value="1"/>
</dbReference>
<dbReference type="SMART" id="SM00851">
    <property type="entry name" value="MGS"/>
    <property type="match status" value="1"/>
</dbReference>
<dbReference type="SUPFAM" id="SSF53927">
    <property type="entry name" value="Cytidine deaminase-like"/>
    <property type="match status" value="1"/>
</dbReference>
<dbReference type="SUPFAM" id="SSF52335">
    <property type="entry name" value="Methylglyoxal synthase-like"/>
    <property type="match status" value="1"/>
</dbReference>
<dbReference type="PROSITE" id="PS51855">
    <property type="entry name" value="MGS"/>
    <property type="match status" value="1"/>
</dbReference>
<reference key="1">
    <citation type="journal article" date="2002" name="DNA Res.">
        <title>Complete genome structure of the thermophilic cyanobacterium Thermosynechococcus elongatus BP-1.</title>
        <authorList>
            <person name="Nakamura Y."/>
            <person name="Kaneko T."/>
            <person name="Sato S."/>
            <person name="Ikeuchi M."/>
            <person name="Katoh H."/>
            <person name="Sasamoto S."/>
            <person name="Watanabe A."/>
            <person name="Iriguchi M."/>
            <person name="Kawashima K."/>
            <person name="Kimura T."/>
            <person name="Kishida Y."/>
            <person name="Kiyokawa C."/>
            <person name="Kohara M."/>
            <person name="Matsumoto M."/>
            <person name="Matsuno A."/>
            <person name="Nakazaki N."/>
            <person name="Shimpo S."/>
            <person name="Sugimoto M."/>
            <person name="Takeuchi C."/>
            <person name="Yamada M."/>
            <person name="Tabata S."/>
        </authorList>
    </citation>
    <scope>NUCLEOTIDE SEQUENCE [LARGE SCALE GENOMIC DNA]</scope>
    <source>
        <strain>NIES-2133 / IAM M-273 / BP-1</strain>
    </source>
</reference>
<name>PUR9_THEVB</name>
<proteinExistence type="inferred from homology"/>
<protein>
    <recommendedName>
        <fullName evidence="1">Bifunctional purine biosynthesis protein PurH</fullName>
    </recommendedName>
    <domain>
        <recommendedName>
            <fullName evidence="1">Phosphoribosylaminoimidazolecarboxamide formyltransferase</fullName>
            <ecNumber evidence="1">2.1.2.3</ecNumber>
        </recommendedName>
        <alternativeName>
            <fullName evidence="1">AICAR transformylase</fullName>
        </alternativeName>
    </domain>
    <domain>
        <recommendedName>
            <fullName evidence="1">IMP cyclohydrolase</fullName>
            <ecNumber evidence="1">3.5.4.10</ecNumber>
        </recommendedName>
        <alternativeName>
            <fullName evidence="1">ATIC</fullName>
        </alternativeName>
        <alternativeName>
            <fullName evidence="1">IMP synthase</fullName>
        </alternativeName>
        <alternativeName>
            <fullName evidence="1">Inosinicase</fullName>
        </alternativeName>
    </domain>
</protein>
<keyword id="KW-0378">Hydrolase</keyword>
<keyword id="KW-0511">Multifunctional enzyme</keyword>
<keyword id="KW-0658">Purine biosynthesis</keyword>
<keyword id="KW-1185">Reference proteome</keyword>
<keyword id="KW-0808">Transferase</keyword>
<sequence length="518" mass="55271">MGRMALLSTSNKQGLVELARALVQEFGFTLLSSGGTAKALQTAGIPVTTVSEYTGAPEILGGRVKTLHPKIHGGILARRDRPQDEADLQAQAIHPIDLVVVNLYPFAETIAQPNVTLAEAIEQIDIGGPTLIRAAAKNHAHVTVLVDPSQYETYLQELRLYGDAQPAFRLACAQQAFALTAHYDQAIAEYLQKVTAAGTEPEILPPVFHLTGRQKQVLRYGENPHQRASWYVCGAHPRGWAAAHLLQGKELSYNNLLDLEAARGVISEFLGDSPPAAVIIKHTNPCGVAEGKTLVEAYERAFAADRVSAFGGIVALNRPLDGATAEALTRTFLECVVAPACEEAALPILKTKPKMRVLTLPELHRAPTTAIQTIAGGFLVQEIHPLPIDPEAWQVVTATEPSPELMAELIFAWKVVKHVKSNAIVVSRDRQTQGIGAGQMNRVGAVEIALSAAGEAARGGVLASDGFFPFADSVEAAALAGIAAIIQPGGSLRDSESIQAANAAGIAMVFTNQRHFRH</sequence>
<accession>Q8DIN5</accession>
<comment type="catalytic activity">
    <reaction evidence="1">
        <text>(6R)-10-formyltetrahydrofolate + 5-amino-1-(5-phospho-beta-D-ribosyl)imidazole-4-carboxamide = 5-formamido-1-(5-phospho-D-ribosyl)imidazole-4-carboxamide + (6S)-5,6,7,8-tetrahydrofolate</text>
        <dbReference type="Rhea" id="RHEA:22192"/>
        <dbReference type="ChEBI" id="CHEBI:57453"/>
        <dbReference type="ChEBI" id="CHEBI:58467"/>
        <dbReference type="ChEBI" id="CHEBI:58475"/>
        <dbReference type="ChEBI" id="CHEBI:195366"/>
        <dbReference type="EC" id="2.1.2.3"/>
    </reaction>
</comment>
<comment type="catalytic activity">
    <reaction evidence="1">
        <text>IMP + H2O = 5-formamido-1-(5-phospho-D-ribosyl)imidazole-4-carboxamide</text>
        <dbReference type="Rhea" id="RHEA:18445"/>
        <dbReference type="ChEBI" id="CHEBI:15377"/>
        <dbReference type="ChEBI" id="CHEBI:58053"/>
        <dbReference type="ChEBI" id="CHEBI:58467"/>
        <dbReference type="EC" id="3.5.4.10"/>
    </reaction>
</comment>
<comment type="pathway">
    <text evidence="1">Purine metabolism; IMP biosynthesis via de novo pathway; 5-formamido-1-(5-phospho-D-ribosyl)imidazole-4-carboxamide from 5-amino-1-(5-phospho-D-ribosyl)imidazole-4-carboxamide (10-formyl THF route): step 1/1.</text>
</comment>
<comment type="pathway">
    <text evidence="1">Purine metabolism; IMP biosynthesis via de novo pathway; IMP from 5-formamido-1-(5-phospho-D-ribosyl)imidazole-4-carboxamide: step 1/1.</text>
</comment>
<comment type="domain">
    <text evidence="1">The IMP cyclohydrolase activity resides in the N-terminal region.</text>
</comment>
<comment type="similarity">
    <text evidence="1">Belongs to the PurH family.</text>
</comment>
<organism>
    <name type="scientific">Thermosynechococcus vestitus (strain NIES-2133 / IAM M-273 / BP-1)</name>
    <dbReference type="NCBI Taxonomy" id="197221"/>
    <lineage>
        <taxon>Bacteria</taxon>
        <taxon>Bacillati</taxon>
        <taxon>Cyanobacteriota</taxon>
        <taxon>Cyanophyceae</taxon>
        <taxon>Acaryochloridales</taxon>
        <taxon>Thermosynechococcaceae</taxon>
        <taxon>Thermosynechococcus</taxon>
    </lineage>
</organism>
<evidence type="ECO:0000255" key="1">
    <source>
        <dbReference type="HAMAP-Rule" id="MF_00139"/>
    </source>
</evidence>
<evidence type="ECO:0000255" key="2">
    <source>
        <dbReference type="PROSITE-ProRule" id="PRU01202"/>
    </source>
</evidence>
<gene>
    <name evidence="1" type="primary">purH</name>
    <name type="ordered locus">tlr1547</name>
</gene>